<name>RL362_ACTP2</name>
<comment type="similarity">
    <text evidence="1">Belongs to the bacterial ribosomal protein bL36 family.</text>
</comment>
<sequence>MKILNSLKTAKTRHPDCQIVRRKGKLYVICKSNPRFKARQR</sequence>
<gene>
    <name evidence="1" type="primary">rpmJ2</name>
    <name type="ordered locus">APL_1822</name>
</gene>
<organism>
    <name type="scientific">Actinobacillus pleuropneumoniae serotype 5b (strain L20)</name>
    <dbReference type="NCBI Taxonomy" id="416269"/>
    <lineage>
        <taxon>Bacteria</taxon>
        <taxon>Pseudomonadati</taxon>
        <taxon>Pseudomonadota</taxon>
        <taxon>Gammaproteobacteria</taxon>
        <taxon>Pasteurellales</taxon>
        <taxon>Pasteurellaceae</taxon>
        <taxon>Actinobacillus</taxon>
    </lineage>
</organism>
<keyword id="KW-1185">Reference proteome</keyword>
<keyword id="KW-0687">Ribonucleoprotein</keyword>
<keyword id="KW-0689">Ribosomal protein</keyword>
<dbReference type="EMBL" id="CP000569">
    <property type="protein sequence ID" value="ABN74904.1"/>
    <property type="molecule type" value="Genomic_DNA"/>
</dbReference>
<dbReference type="SMR" id="A3N3B8"/>
<dbReference type="STRING" id="416269.APL_1822"/>
<dbReference type="EnsemblBacteria" id="ABN74904">
    <property type="protein sequence ID" value="ABN74904"/>
    <property type="gene ID" value="APL_1822"/>
</dbReference>
<dbReference type="KEGG" id="apl:APL_1822"/>
<dbReference type="eggNOG" id="COG0257">
    <property type="taxonomic scope" value="Bacteria"/>
</dbReference>
<dbReference type="HOGENOM" id="CLU_135723_3_3_6"/>
<dbReference type="Proteomes" id="UP000001432">
    <property type="component" value="Chromosome"/>
</dbReference>
<dbReference type="GO" id="GO:1990904">
    <property type="term" value="C:ribonucleoprotein complex"/>
    <property type="evidence" value="ECO:0007669"/>
    <property type="project" value="UniProtKB-KW"/>
</dbReference>
<dbReference type="GO" id="GO:0005840">
    <property type="term" value="C:ribosome"/>
    <property type="evidence" value="ECO:0007669"/>
    <property type="project" value="UniProtKB-KW"/>
</dbReference>
<dbReference type="GO" id="GO:0003735">
    <property type="term" value="F:structural constituent of ribosome"/>
    <property type="evidence" value="ECO:0007669"/>
    <property type="project" value="InterPro"/>
</dbReference>
<dbReference type="GO" id="GO:0006412">
    <property type="term" value="P:translation"/>
    <property type="evidence" value="ECO:0007669"/>
    <property type="project" value="UniProtKB-UniRule"/>
</dbReference>
<dbReference type="HAMAP" id="MF_00251">
    <property type="entry name" value="Ribosomal_bL36"/>
    <property type="match status" value="1"/>
</dbReference>
<dbReference type="InterPro" id="IPR000473">
    <property type="entry name" value="Ribosomal_bL36"/>
</dbReference>
<dbReference type="InterPro" id="IPR035977">
    <property type="entry name" value="Ribosomal_bL36_sp"/>
</dbReference>
<dbReference type="InterPro" id="IPR047621">
    <property type="entry name" value="Ribosomal_L36_bact"/>
</dbReference>
<dbReference type="NCBIfam" id="NF002021">
    <property type="entry name" value="PRK00831.1"/>
    <property type="match status" value="1"/>
</dbReference>
<dbReference type="NCBIfam" id="TIGR01022">
    <property type="entry name" value="rpmJ_bact"/>
    <property type="match status" value="1"/>
</dbReference>
<dbReference type="PANTHER" id="PTHR47781">
    <property type="entry name" value="50S RIBOSOMAL PROTEIN L36 2"/>
    <property type="match status" value="1"/>
</dbReference>
<dbReference type="PANTHER" id="PTHR47781:SF1">
    <property type="entry name" value="LARGE RIBOSOMAL SUBUNIT PROTEIN BL36B"/>
    <property type="match status" value="1"/>
</dbReference>
<dbReference type="Pfam" id="PF00444">
    <property type="entry name" value="Ribosomal_L36"/>
    <property type="match status" value="1"/>
</dbReference>
<dbReference type="SUPFAM" id="SSF57840">
    <property type="entry name" value="Ribosomal protein L36"/>
    <property type="match status" value="1"/>
</dbReference>
<dbReference type="PROSITE" id="PS00828">
    <property type="entry name" value="RIBOSOMAL_L36"/>
    <property type="match status" value="1"/>
</dbReference>
<protein>
    <recommendedName>
        <fullName evidence="1">Large ribosomal subunit protein bL36B</fullName>
    </recommendedName>
    <alternativeName>
        <fullName evidence="2">50S ribosomal protein L36 2</fullName>
    </alternativeName>
</protein>
<evidence type="ECO:0000255" key="1">
    <source>
        <dbReference type="HAMAP-Rule" id="MF_00251"/>
    </source>
</evidence>
<evidence type="ECO:0000305" key="2"/>
<accession>A3N3B8</accession>
<feature type="chain" id="PRO_0000344637" description="Large ribosomal subunit protein bL36B">
    <location>
        <begin position="1"/>
        <end position="41"/>
    </location>
</feature>
<reference key="1">
    <citation type="journal article" date="2008" name="J. Bacteriol.">
        <title>The complete genome sequence of Actinobacillus pleuropneumoniae L20 (serotype 5b).</title>
        <authorList>
            <person name="Foote S.J."/>
            <person name="Bosse J.T."/>
            <person name="Bouevitch A.B."/>
            <person name="Langford P.R."/>
            <person name="Young N.M."/>
            <person name="Nash J.H.E."/>
        </authorList>
    </citation>
    <scope>NUCLEOTIDE SEQUENCE [LARGE SCALE GENOMIC DNA]</scope>
    <source>
        <strain>L20</strain>
    </source>
</reference>
<proteinExistence type="inferred from homology"/>